<geneLocation type="chloroplast"/>
<name>ATPI_GUITH</name>
<organism>
    <name type="scientific">Guillardia theta</name>
    <name type="common">Cryptophyte</name>
    <name type="synonym">Cryptomonas phi</name>
    <dbReference type="NCBI Taxonomy" id="55529"/>
    <lineage>
        <taxon>Eukaryota</taxon>
        <taxon>Cryptophyceae</taxon>
        <taxon>Pyrenomonadales</taxon>
        <taxon>Geminigeraceae</taxon>
        <taxon>Guillardia</taxon>
    </lineage>
</organism>
<proteinExistence type="inferred from homology"/>
<protein>
    <recommendedName>
        <fullName evidence="1">ATP synthase subunit a, chloroplastic</fullName>
    </recommendedName>
    <alternativeName>
        <fullName evidence="1">ATP synthase F0 sector subunit a</fullName>
    </alternativeName>
    <alternativeName>
        <fullName evidence="1">F-ATPase subunit IV</fullName>
    </alternativeName>
</protein>
<gene>
    <name evidence="1" type="primary">atpI</name>
</gene>
<feature type="chain" id="PRO_0000002585" description="ATP synthase subunit a, chloroplastic">
    <location>
        <begin position="1"/>
        <end position="248"/>
    </location>
</feature>
<feature type="transmembrane region" description="Helical" evidence="1">
    <location>
        <begin position="34"/>
        <end position="54"/>
    </location>
</feature>
<feature type="transmembrane region" description="Helical" evidence="1">
    <location>
        <begin position="95"/>
        <end position="115"/>
    </location>
</feature>
<feature type="transmembrane region" description="Helical" evidence="1">
    <location>
        <begin position="134"/>
        <end position="154"/>
    </location>
</feature>
<feature type="transmembrane region" description="Helical" evidence="1">
    <location>
        <begin position="203"/>
        <end position="223"/>
    </location>
</feature>
<comment type="function">
    <text evidence="1">Key component of the proton channel; it plays a direct role in the translocation of protons across the membrane.</text>
</comment>
<comment type="subunit">
    <text evidence="1">F-type ATPases have 2 components, CF(1) - the catalytic core - and CF(0) - the membrane proton channel. CF(1) has five subunits: alpha(3), beta(3), gamma(1), delta(1), epsilon(1). CF(0) has four main subunits: a, b, b' and c.</text>
</comment>
<comment type="subcellular location">
    <subcellularLocation>
        <location evidence="1">Plastid</location>
        <location evidence="1">Chloroplast thylakoid membrane</location>
        <topology evidence="1">Multi-pass membrane protein</topology>
    </subcellularLocation>
</comment>
<comment type="similarity">
    <text evidence="1">Belongs to the ATPase A chain family.</text>
</comment>
<accession>O78480</accession>
<keyword id="KW-0066">ATP synthesis</keyword>
<keyword id="KW-0138">CF(0)</keyword>
<keyword id="KW-0150">Chloroplast</keyword>
<keyword id="KW-0375">Hydrogen ion transport</keyword>
<keyword id="KW-0406">Ion transport</keyword>
<keyword id="KW-0472">Membrane</keyword>
<keyword id="KW-0934">Plastid</keyword>
<keyword id="KW-0793">Thylakoid</keyword>
<keyword id="KW-0812">Transmembrane</keyword>
<keyword id="KW-1133">Transmembrane helix</keyword>
<keyword id="KW-0813">Transport</keyword>
<reference key="1">
    <citation type="journal article" date="1999" name="J. Phycol.">
        <title>The atpA gene cluster of a cryptomonad, Guillardia theta: a piece in the puzzle of chloroplast genome development.</title>
        <authorList>
            <person name="Leitsch C.E.W."/>
            <person name="Kowallik K.V."/>
            <person name="Douglas S.E."/>
        </authorList>
    </citation>
    <scope>NUCLEOTIDE SEQUENCE [GENOMIC DNA]</scope>
</reference>
<reference key="2">
    <citation type="journal article" date="1999" name="J. Mol. Evol.">
        <title>The plastid genome of the cryptophyte alga, Guillardia theta: complete sequence and conserved synteny groups confirm its common ancestry with red algae.</title>
        <authorList>
            <person name="Douglas S.E."/>
            <person name="Penny S.L."/>
        </authorList>
    </citation>
    <scope>NUCLEOTIDE SEQUENCE [LARGE SCALE GENOMIC DNA]</scope>
</reference>
<sequence>MTYNLNCDISNSFYRLAEVEVGKHLYWEIAGFKLHGQVFIVSWLVMLALIIFALNGTRKLNQIPSGIQNFMEYVYEFLQDIAKNQIGEEDYRPWVPYISTVFLFIFGANWAGALIPWKLIQLPEGELAAPTNDINVTVALALLTSISYFYAGISKKGISYFSRYVQPTPILLPINILEDFTKPLSLSFRLFGNVLADELVVSVFALLVPILIPLPVMTLGLFASSVQALIFSTLSAAYIGEALEDHGH</sequence>
<dbReference type="EMBL" id="AF041468">
    <property type="protein sequence ID" value="AAC35671.1"/>
    <property type="molecule type" value="Genomic_DNA"/>
</dbReference>
<dbReference type="RefSeq" id="NP_050737.1">
    <property type="nucleotide sequence ID" value="NC_000926.1"/>
</dbReference>
<dbReference type="SMR" id="O78480"/>
<dbReference type="GeneID" id="857042"/>
<dbReference type="HOGENOM" id="CLU_041018_2_4_1"/>
<dbReference type="OMA" id="GFFWAAF"/>
<dbReference type="GO" id="GO:0009535">
    <property type="term" value="C:chloroplast thylakoid membrane"/>
    <property type="evidence" value="ECO:0007669"/>
    <property type="project" value="UniProtKB-SubCell"/>
</dbReference>
<dbReference type="GO" id="GO:0005886">
    <property type="term" value="C:plasma membrane"/>
    <property type="evidence" value="ECO:0007669"/>
    <property type="project" value="UniProtKB-UniRule"/>
</dbReference>
<dbReference type="GO" id="GO:0045259">
    <property type="term" value="C:proton-transporting ATP synthase complex"/>
    <property type="evidence" value="ECO:0007669"/>
    <property type="project" value="UniProtKB-KW"/>
</dbReference>
<dbReference type="GO" id="GO:0046933">
    <property type="term" value="F:proton-transporting ATP synthase activity, rotational mechanism"/>
    <property type="evidence" value="ECO:0007669"/>
    <property type="project" value="UniProtKB-UniRule"/>
</dbReference>
<dbReference type="CDD" id="cd00310">
    <property type="entry name" value="ATP-synt_Fo_a_6"/>
    <property type="match status" value="1"/>
</dbReference>
<dbReference type="FunFam" id="1.20.120.220:FF:000001">
    <property type="entry name" value="ATP synthase subunit a, chloroplastic"/>
    <property type="match status" value="1"/>
</dbReference>
<dbReference type="Gene3D" id="1.20.120.220">
    <property type="entry name" value="ATP synthase, F0 complex, subunit A"/>
    <property type="match status" value="1"/>
</dbReference>
<dbReference type="HAMAP" id="MF_01393">
    <property type="entry name" value="ATP_synth_a_bact"/>
    <property type="match status" value="1"/>
</dbReference>
<dbReference type="InterPro" id="IPR045082">
    <property type="entry name" value="ATP_syn_F0_a_bact/chloroplast"/>
</dbReference>
<dbReference type="InterPro" id="IPR000568">
    <property type="entry name" value="ATP_synth_F0_asu"/>
</dbReference>
<dbReference type="InterPro" id="IPR023011">
    <property type="entry name" value="ATP_synth_F0_asu_AS"/>
</dbReference>
<dbReference type="InterPro" id="IPR035908">
    <property type="entry name" value="F0_ATP_A_sf"/>
</dbReference>
<dbReference type="NCBIfam" id="TIGR01131">
    <property type="entry name" value="ATP_synt_6_or_A"/>
    <property type="match status" value="1"/>
</dbReference>
<dbReference type="PANTHER" id="PTHR42823">
    <property type="entry name" value="ATP SYNTHASE SUBUNIT A, CHLOROPLASTIC"/>
    <property type="match status" value="1"/>
</dbReference>
<dbReference type="PANTHER" id="PTHR42823:SF3">
    <property type="entry name" value="ATP SYNTHASE SUBUNIT A, CHLOROPLASTIC"/>
    <property type="match status" value="1"/>
</dbReference>
<dbReference type="Pfam" id="PF00119">
    <property type="entry name" value="ATP-synt_A"/>
    <property type="match status" value="1"/>
</dbReference>
<dbReference type="PRINTS" id="PR00123">
    <property type="entry name" value="ATPASEA"/>
</dbReference>
<dbReference type="SUPFAM" id="SSF81336">
    <property type="entry name" value="F1F0 ATP synthase subunit A"/>
    <property type="match status" value="1"/>
</dbReference>
<dbReference type="PROSITE" id="PS00449">
    <property type="entry name" value="ATPASE_A"/>
    <property type="match status" value="1"/>
</dbReference>
<evidence type="ECO:0000255" key="1">
    <source>
        <dbReference type="HAMAP-Rule" id="MF_01393"/>
    </source>
</evidence>